<dbReference type="EC" id="2.3.1.97" evidence="1"/>
<dbReference type="EMBL" id="AF043327">
    <property type="protein sequence ID" value="AAC09297.1"/>
    <property type="molecule type" value="mRNA"/>
</dbReference>
<dbReference type="CCDS" id="CCDS15644.1"/>
<dbReference type="RefSeq" id="NP_032734.1">
    <property type="nucleotide sequence ID" value="NM_008708.2"/>
</dbReference>
<dbReference type="SMR" id="O70311"/>
<dbReference type="BioGRID" id="201794">
    <property type="interactions" value="6"/>
</dbReference>
<dbReference type="FunCoup" id="O70311">
    <property type="interactions" value="3816"/>
</dbReference>
<dbReference type="IntAct" id="O70311">
    <property type="interactions" value="1"/>
</dbReference>
<dbReference type="MINT" id="O70311"/>
<dbReference type="STRING" id="10090.ENSMUSP00000080600"/>
<dbReference type="GlyGen" id="O70311">
    <property type="glycosylation" value="1 site, 1 N-linked glycan (1 site)"/>
</dbReference>
<dbReference type="iPTMnet" id="O70311"/>
<dbReference type="PhosphoSitePlus" id="O70311"/>
<dbReference type="SwissPalm" id="O70311"/>
<dbReference type="jPOST" id="O70311"/>
<dbReference type="PaxDb" id="10090-ENSMUSP00000080600"/>
<dbReference type="ProteomicsDB" id="293695"/>
<dbReference type="Pumba" id="O70311"/>
<dbReference type="Antibodypedia" id="673">
    <property type="antibodies" value="430 antibodies from 28 providers"/>
</dbReference>
<dbReference type="Ensembl" id="ENSMUST00000081932.13">
    <property type="protein sequence ID" value="ENSMUSP00000080600.7"/>
    <property type="gene ID" value="ENSMUSG00000026643.17"/>
</dbReference>
<dbReference type="GeneID" id="18108"/>
<dbReference type="KEGG" id="mmu:18108"/>
<dbReference type="UCSC" id="uc008idq.2">
    <property type="organism name" value="mouse"/>
</dbReference>
<dbReference type="AGR" id="MGI:1202298"/>
<dbReference type="CTD" id="9397"/>
<dbReference type="MGI" id="MGI:1202298">
    <property type="gene designation" value="Nmt2"/>
</dbReference>
<dbReference type="VEuPathDB" id="HostDB:ENSMUSG00000026643"/>
<dbReference type="eggNOG" id="KOG2779">
    <property type="taxonomic scope" value="Eukaryota"/>
</dbReference>
<dbReference type="GeneTree" id="ENSGT00390000017837"/>
<dbReference type="InParanoid" id="O70311"/>
<dbReference type="OrthoDB" id="60315at2759"/>
<dbReference type="PhylomeDB" id="O70311"/>
<dbReference type="TreeFam" id="TF300701"/>
<dbReference type="BRENDA" id="2.3.1.97">
    <property type="organism ID" value="3474"/>
</dbReference>
<dbReference type="Reactome" id="R-MMU-2514859">
    <property type="pathway name" value="Inactivation, recovery and regulation of the phototransduction cascade"/>
</dbReference>
<dbReference type="BioGRID-ORCS" id="18108">
    <property type="hits" value="2 hits in 81 CRISPR screens"/>
</dbReference>
<dbReference type="ChiTaRS" id="Nmt2">
    <property type="organism name" value="mouse"/>
</dbReference>
<dbReference type="PRO" id="PR:O70311"/>
<dbReference type="Proteomes" id="UP000000589">
    <property type="component" value="Chromosome 2"/>
</dbReference>
<dbReference type="RNAct" id="O70311">
    <property type="molecule type" value="protein"/>
</dbReference>
<dbReference type="Bgee" id="ENSMUSG00000026643">
    <property type="expression patterns" value="Expressed in cumulus cell and 226 other cell types or tissues"/>
</dbReference>
<dbReference type="ExpressionAtlas" id="O70311">
    <property type="expression patterns" value="baseline and differential"/>
</dbReference>
<dbReference type="GO" id="GO:0005737">
    <property type="term" value="C:cytoplasm"/>
    <property type="evidence" value="ECO:0000304"/>
    <property type="project" value="MGI"/>
</dbReference>
<dbReference type="GO" id="GO:0016020">
    <property type="term" value="C:membrane"/>
    <property type="evidence" value="ECO:0007669"/>
    <property type="project" value="UniProtKB-SubCell"/>
</dbReference>
<dbReference type="GO" id="GO:0004379">
    <property type="term" value="F:glycylpeptide N-tetradecanoyltransferase activity"/>
    <property type="evidence" value="ECO:0000250"/>
    <property type="project" value="UniProtKB"/>
</dbReference>
<dbReference type="GO" id="GO:0018030">
    <property type="term" value="F:peptidyl-lysine N6-myristoyltransferase activity"/>
    <property type="evidence" value="ECO:0000250"/>
    <property type="project" value="UniProtKB"/>
</dbReference>
<dbReference type="GO" id="GO:0018008">
    <property type="term" value="P:N-terminal peptidyl-glycine N-myristoylation"/>
    <property type="evidence" value="ECO:0000250"/>
    <property type="project" value="UniProtKB"/>
</dbReference>
<dbReference type="FunFam" id="3.40.630.170:FF:000001">
    <property type="entry name" value="Glycylpeptide N-tetradecanoyltransferase"/>
    <property type="match status" value="1"/>
</dbReference>
<dbReference type="Gene3D" id="3.40.630.170">
    <property type="match status" value="1"/>
</dbReference>
<dbReference type="InterPro" id="IPR016181">
    <property type="entry name" value="Acyl_CoA_acyltransferase"/>
</dbReference>
<dbReference type="InterPro" id="IPR000903">
    <property type="entry name" value="NMT"/>
</dbReference>
<dbReference type="InterPro" id="IPR022677">
    <property type="entry name" value="NMT_C"/>
</dbReference>
<dbReference type="InterPro" id="IPR022678">
    <property type="entry name" value="NMT_CS"/>
</dbReference>
<dbReference type="InterPro" id="IPR022676">
    <property type="entry name" value="NMT_N"/>
</dbReference>
<dbReference type="PANTHER" id="PTHR11377:SF14">
    <property type="entry name" value="GLYCYLPEPTIDE N-TETRADECANOYLTRANSFERASE 2"/>
    <property type="match status" value="1"/>
</dbReference>
<dbReference type="PANTHER" id="PTHR11377">
    <property type="entry name" value="N-MYRISTOYL TRANSFERASE"/>
    <property type="match status" value="1"/>
</dbReference>
<dbReference type="Pfam" id="PF01233">
    <property type="entry name" value="NMT"/>
    <property type="match status" value="1"/>
</dbReference>
<dbReference type="Pfam" id="PF02799">
    <property type="entry name" value="NMT_C"/>
    <property type="match status" value="1"/>
</dbReference>
<dbReference type="SUPFAM" id="SSF55729">
    <property type="entry name" value="Acyl-CoA N-acyltransferases (Nat)"/>
    <property type="match status" value="2"/>
</dbReference>
<dbReference type="PROSITE" id="PS00975">
    <property type="entry name" value="NMT_1"/>
    <property type="match status" value="1"/>
</dbReference>
<dbReference type="PROSITE" id="PS00976">
    <property type="entry name" value="NMT_2"/>
    <property type="match status" value="1"/>
</dbReference>
<proteinExistence type="evidence at protein level"/>
<evidence type="ECO:0000250" key="1">
    <source>
        <dbReference type="UniProtKB" id="O60551"/>
    </source>
</evidence>
<evidence type="ECO:0000256" key="2">
    <source>
        <dbReference type="SAM" id="MobiDB-lite"/>
    </source>
</evidence>
<evidence type="ECO:0000305" key="3"/>
<keyword id="KW-0012">Acyltransferase</keyword>
<keyword id="KW-0963">Cytoplasm</keyword>
<keyword id="KW-0472">Membrane</keyword>
<keyword id="KW-0597">Phosphoprotein</keyword>
<keyword id="KW-1185">Reference proteome</keyword>
<keyword id="KW-0808">Transferase</keyword>
<reference key="1">
    <citation type="journal article" date="1998" name="J. Biol. Chem.">
        <title>A second mammalian N-myristoyltransferase.</title>
        <authorList>
            <person name="Giang D.K."/>
            <person name="Cravatt B.F."/>
        </authorList>
    </citation>
    <scope>NUCLEOTIDE SEQUENCE [MRNA]</scope>
    <source>
        <tissue>Liver</tissue>
    </source>
</reference>
<reference key="2">
    <citation type="journal article" date="2010" name="Cell">
        <title>A tissue-specific atlas of mouse protein phosphorylation and expression.</title>
        <authorList>
            <person name="Huttlin E.L."/>
            <person name="Jedrychowski M.P."/>
            <person name="Elias J.E."/>
            <person name="Goswami T."/>
            <person name="Rad R."/>
            <person name="Beausoleil S.A."/>
            <person name="Villen J."/>
            <person name="Haas W."/>
            <person name="Sowa M.E."/>
            <person name="Gygi S.P."/>
        </authorList>
    </citation>
    <scope>IDENTIFICATION BY MASS SPECTROMETRY [LARGE SCALE ANALYSIS]</scope>
    <source>
        <tissue>Brain</tissue>
        <tissue>Testis</tissue>
    </source>
</reference>
<accession>O70311</accession>
<feature type="chain" id="PRO_0000064227" description="Glycylpeptide N-tetradecanoyltransferase 2">
    <location>
        <begin position="1"/>
        <end position="529"/>
    </location>
</feature>
<feature type="region of interest" description="Disordered" evidence="2">
    <location>
        <begin position="1"/>
        <end position="82"/>
    </location>
</feature>
<feature type="compositionally biased region" description="Acidic residues" evidence="2">
    <location>
        <begin position="15"/>
        <end position="32"/>
    </location>
</feature>
<feature type="compositionally biased region" description="Basic residues" evidence="2">
    <location>
        <begin position="46"/>
        <end position="57"/>
    </location>
</feature>
<feature type="compositionally biased region" description="Polar residues" evidence="2">
    <location>
        <begin position="61"/>
        <end position="82"/>
    </location>
</feature>
<feature type="binding site" evidence="1">
    <location>
        <position position="153"/>
    </location>
    <ligand>
        <name>tetradecanoyl-CoA</name>
        <dbReference type="ChEBI" id="CHEBI:57385"/>
    </ligand>
</feature>
<feature type="binding site" evidence="1">
    <location>
        <position position="281"/>
    </location>
    <ligand>
        <name>tetradecanoyl-CoA</name>
        <dbReference type="ChEBI" id="CHEBI:57385"/>
    </ligand>
</feature>
<feature type="binding site" evidence="1">
    <location>
        <position position="283"/>
    </location>
    <ligand>
        <name>tetradecanoyl-CoA</name>
        <dbReference type="ChEBI" id="CHEBI:57385"/>
    </ligand>
</feature>
<feature type="binding site" evidence="1">
    <location>
        <position position="289"/>
    </location>
    <ligand>
        <name>tetradecanoyl-CoA</name>
        <dbReference type="ChEBI" id="CHEBI:57385"/>
    </ligand>
</feature>
<feature type="binding site" evidence="1">
    <location>
        <position position="291"/>
    </location>
    <ligand>
        <name>tetradecanoyl-CoA</name>
        <dbReference type="ChEBI" id="CHEBI:57385"/>
    </ligand>
</feature>
<feature type="binding site" evidence="1">
    <location>
        <position position="292"/>
    </location>
    <ligand>
        <name>tetradecanoyl-CoA</name>
        <dbReference type="ChEBI" id="CHEBI:57385"/>
    </ligand>
</feature>
<feature type="binding site" evidence="1">
    <location>
        <position position="293"/>
    </location>
    <ligand>
        <name>tetradecanoyl-CoA</name>
        <dbReference type="ChEBI" id="CHEBI:57385"/>
    </ligand>
</feature>
<feature type="modified residue" description="Phosphoserine" evidence="1">
    <location>
        <position position="38"/>
    </location>
</feature>
<protein>
    <recommendedName>
        <fullName>Glycylpeptide N-tetradecanoyltransferase 2</fullName>
        <ecNumber evidence="1">2.3.1.97</ecNumber>
    </recommendedName>
    <alternativeName>
        <fullName>Myristoyl-CoA:protein N-myristoyltransferase 2</fullName>
        <shortName>NMT 2</shortName>
    </alternativeName>
    <alternativeName>
        <fullName>Peptide N-myristoyltransferase 2</fullName>
    </alternativeName>
    <alternativeName>
        <fullName>Type II N-myristoyltransferase</fullName>
    </alternativeName>
</protein>
<name>NMT2_MOUSE</name>
<gene>
    <name type="primary">Nmt2</name>
</gene>
<sequence>MAEDSESAASQQSLELDDQDTCGIDGDNEEETEHAKGSPGGDLGAKKKKKKQKRKKEKPNSGGTKSDSASDSQEIKIQQSSKHNAIWQQISAGAAMGGDTMEGEWIDLRMYHKNPTIPIQKLQDIQRAMELLSACQGPARNIDEATKRRYQFWDTQPVPKLNEVITSHGAIEPDKDNIRQEPYSLPQGFMWDTLDLSNAEVLKELYTLLNENYVEDDDNMFRFDYSPEFLLWALRPPGWLLQWHCGVRVSSNKKLVGFISAIPANIRIYDSVKRMVEINFLCVHKKLRSKRVAPVLIREITRRVNLEGIFQAVYTAGVVLPKPVATCRYWHRSLNPRKLVEVKFSHLSRNMTLQRTMKLYRLPDVTKTSGLRPMEPKDIKAVRELINIYLKQFHLAPVMDDAEVAHWFLPREHIIDTFVVENPSGKLTDFLSFYTLPSTVMHHPAHKSLKAAYSFYNIHTETPLLDLMNDALIIAKLKGFDVFNALDLMENKTFLEKLKFGIGDGNLQYYLYNWRCPGTDSEKVGLVLQ</sequence>
<organism>
    <name type="scientific">Mus musculus</name>
    <name type="common">Mouse</name>
    <dbReference type="NCBI Taxonomy" id="10090"/>
    <lineage>
        <taxon>Eukaryota</taxon>
        <taxon>Metazoa</taxon>
        <taxon>Chordata</taxon>
        <taxon>Craniata</taxon>
        <taxon>Vertebrata</taxon>
        <taxon>Euteleostomi</taxon>
        <taxon>Mammalia</taxon>
        <taxon>Eutheria</taxon>
        <taxon>Euarchontoglires</taxon>
        <taxon>Glires</taxon>
        <taxon>Rodentia</taxon>
        <taxon>Myomorpha</taxon>
        <taxon>Muroidea</taxon>
        <taxon>Muridae</taxon>
        <taxon>Murinae</taxon>
        <taxon>Mus</taxon>
        <taxon>Mus</taxon>
    </lineage>
</organism>
<comment type="function">
    <text evidence="1">Adds a myristoyl group to the N-terminal glycine residue of certain cellular and viral proteins. Also able to mediate N-terminal lysine myristoylation of proteins: catalyzes myristoylation of ARF6 on both 'Gly-2' and 'Lys-3'. Lysine myristoylation is required to maintain ARF6 on membranes during the GTPase cycle.</text>
</comment>
<comment type="catalytic activity">
    <reaction evidence="1">
        <text>N-terminal glycyl-[protein] + tetradecanoyl-CoA = N-tetradecanoylglycyl-[protein] + CoA + H(+)</text>
        <dbReference type="Rhea" id="RHEA:15521"/>
        <dbReference type="Rhea" id="RHEA-COMP:12666"/>
        <dbReference type="Rhea" id="RHEA-COMP:12667"/>
        <dbReference type="ChEBI" id="CHEBI:15378"/>
        <dbReference type="ChEBI" id="CHEBI:57287"/>
        <dbReference type="ChEBI" id="CHEBI:57385"/>
        <dbReference type="ChEBI" id="CHEBI:64723"/>
        <dbReference type="ChEBI" id="CHEBI:133050"/>
        <dbReference type="EC" id="2.3.1.97"/>
    </reaction>
</comment>
<comment type="catalytic activity">
    <reaction evidence="1">
        <text>N-terminal glycyl-L-lysyl-[protein] + tetradecanoyl-CoA = N-terminal glycyl-(N(6)-tetradecanoyl)-L-lysyl-[protein] + CoA + H(+)</text>
        <dbReference type="Rhea" id="RHEA:70671"/>
        <dbReference type="Rhea" id="RHEA-COMP:17947"/>
        <dbReference type="Rhea" id="RHEA-COMP:17948"/>
        <dbReference type="ChEBI" id="CHEBI:15378"/>
        <dbReference type="ChEBI" id="CHEBI:57287"/>
        <dbReference type="ChEBI" id="CHEBI:57385"/>
        <dbReference type="ChEBI" id="CHEBI:189855"/>
        <dbReference type="ChEBI" id="CHEBI:189856"/>
    </reaction>
    <physiologicalReaction direction="left-to-right" evidence="1">
        <dbReference type="Rhea" id="RHEA:70672"/>
    </physiologicalReaction>
</comment>
<comment type="subcellular location">
    <subcellularLocation>
        <location evidence="1">Cytoplasm</location>
    </subcellularLocation>
    <subcellularLocation>
        <location evidence="1">Membrane</location>
        <topology evidence="1">Peripheral membrane protein</topology>
    </subcellularLocation>
</comment>
<comment type="similarity">
    <text evidence="3">Belongs to the NMT family.</text>
</comment>